<reference key="1">
    <citation type="journal article" date="2004" name="Proc. Natl. Acad. Sci. U.S.A.">
        <title>The diploid genome sequence of Candida albicans.</title>
        <authorList>
            <person name="Jones T."/>
            <person name="Federspiel N.A."/>
            <person name="Chibana H."/>
            <person name="Dungan J."/>
            <person name="Kalman S."/>
            <person name="Magee B.B."/>
            <person name="Newport G."/>
            <person name="Thorstenson Y.R."/>
            <person name="Agabian N."/>
            <person name="Magee P.T."/>
            <person name="Davis R.W."/>
            <person name="Scherer S."/>
        </authorList>
    </citation>
    <scope>NUCLEOTIDE SEQUENCE [LARGE SCALE GENOMIC DNA]</scope>
    <source>
        <strain>SC5314 / ATCC MYA-2876</strain>
    </source>
</reference>
<reference key="2">
    <citation type="journal article" date="2007" name="Genome Biol.">
        <title>Assembly of the Candida albicans genome into sixteen supercontigs aligned on the eight chromosomes.</title>
        <authorList>
            <person name="van het Hoog M."/>
            <person name="Rast T.J."/>
            <person name="Martchenko M."/>
            <person name="Grindle S."/>
            <person name="Dignard D."/>
            <person name="Hogues H."/>
            <person name="Cuomo C."/>
            <person name="Berriman M."/>
            <person name="Scherer S."/>
            <person name="Magee B.B."/>
            <person name="Whiteway M."/>
            <person name="Chibana H."/>
            <person name="Nantel A."/>
            <person name="Magee P.T."/>
        </authorList>
    </citation>
    <scope>GENOME REANNOTATION</scope>
    <source>
        <strain>SC5314 / ATCC MYA-2876</strain>
    </source>
</reference>
<reference key="3">
    <citation type="journal article" date="2013" name="Genome Biol.">
        <title>Assembly of a phased diploid Candida albicans genome facilitates allele-specific measurements and provides a simple model for repeat and indel structure.</title>
        <authorList>
            <person name="Muzzey D."/>
            <person name="Schwartz K."/>
            <person name="Weissman J.S."/>
            <person name="Sherlock G."/>
        </authorList>
    </citation>
    <scope>NUCLEOTIDE SEQUENCE [LARGE SCALE GENOMIC DNA]</scope>
    <scope>GENOME REANNOTATION</scope>
    <source>
        <strain>SC5314 / ATCC MYA-2876</strain>
    </source>
</reference>
<reference key="4">
    <citation type="journal article" date="2014" name="FEMS Yeast Res.">
        <title>Secretion and filamentation are mediated by the Candida albicans t-SNAREs Sso2p and Sec9p.</title>
        <authorList>
            <person name="Bernardo S.M."/>
            <person name="Rane H.S."/>
            <person name="Chavez-Dozal A."/>
            <person name="Lee S.A."/>
        </authorList>
    </citation>
    <scope>FUNCTION</scope>
    <scope>DISRUPTION PHENOTYPE</scope>
</reference>
<organism>
    <name type="scientific">Candida albicans (strain SC5314 / ATCC MYA-2876)</name>
    <name type="common">Yeast</name>
    <dbReference type="NCBI Taxonomy" id="237561"/>
    <lineage>
        <taxon>Eukaryota</taxon>
        <taxon>Fungi</taxon>
        <taxon>Dikarya</taxon>
        <taxon>Ascomycota</taxon>
        <taxon>Saccharomycotina</taxon>
        <taxon>Pichiomycetes</taxon>
        <taxon>Debaryomycetaceae</taxon>
        <taxon>Candida/Lodderomyces clade</taxon>
        <taxon>Candida</taxon>
    </lineage>
</organism>
<sequence>MGIKKMFQKKEPTEQEIREELSRVGISTRSNNTRQEKFGAFKNYAQERANMKPQLGPVGGNPYANINPGTNNNNNNPYANDNGNNSTGNPNNNSNSNNGGNPYGGGVTNNNPYGGSGGNGRGSSPSPYAPTTSTTTRSSNPYGNNNGSRSSQNTSSPYAKSTNNSSYSNSPYSGSTVNNGNRGGHSNNSNSSAGGNPYAAGGRSSQSQNSRDNVYTAPATRTSTRQTQGYGGGDTDSTLDLNAIPSHQMFDNKKPIKRNQQSSQQPANDYNLDLNDEYGEEEDLNLDISEVPEEQQQINSEDEEVEAIKQDIKFVKQESVQSTRNTLRMAQEADASGTNTLGMLGSQSERLYNAEQNLLLAETQTQIADEKVKELKRLNRSIFIPANGNPFNKKSRLRQQEEKIKNQKLQEKYIRENNRQEMFASEQRIKQGITNNSTNNDVYNKYQDEKNLSAAKRYQFENDSEDDDMEKEIASNLNQIDQYAKKLKGLANTMGTEVDNQNTRLKKIEESADKLDINVHMNTTRLNNIR</sequence>
<proteinExistence type="inferred from homology"/>
<dbReference type="EMBL" id="CP017628">
    <property type="protein sequence ID" value="AOW30056.1"/>
    <property type="molecule type" value="Genomic_DNA"/>
</dbReference>
<dbReference type="RefSeq" id="XP_714323.2">
    <property type="nucleotide sequence ID" value="XM_709230.2"/>
</dbReference>
<dbReference type="SMR" id="Q59XP0"/>
<dbReference type="STRING" id="237561.Q59XP0"/>
<dbReference type="EnsemblFungi" id="C6_01100W_A-T">
    <property type="protein sequence ID" value="C6_01100W_A-T-p1"/>
    <property type="gene ID" value="C6_01100W_A"/>
</dbReference>
<dbReference type="GeneID" id="3644052"/>
<dbReference type="KEGG" id="cal:CAALFM_C601100WA"/>
<dbReference type="CGD" id="CAL0000200439">
    <property type="gene designation" value="SEC9"/>
</dbReference>
<dbReference type="VEuPathDB" id="FungiDB:C6_01100W_A"/>
<dbReference type="HOGENOM" id="CLU_020823_1_0_1"/>
<dbReference type="InParanoid" id="Q59XP0"/>
<dbReference type="OrthoDB" id="18679at2759"/>
<dbReference type="PRO" id="PR:Q59XP0"/>
<dbReference type="Proteomes" id="UP000000559">
    <property type="component" value="Chromosome 6"/>
</dbReference>
<dbReference type="GO" id="GO:0005886">
    <property type="term" value="C:plasma membrane"/>
    <property type="evidence" value="ECO:0000318"/>
    <property type="project" value="GO_Central"/>
</dbReference>
<dbReference type="GO" id="GO:0031201">
    <property type="term" value="C:SNARE complex"/>
    <property type="evidence" value="ECO:0000318"/>
    <property type="project" value="GO_Central"/>
</dbReference>
<dbReference type="GO" id="GO:0005484">
    <property type="term" value="F:SNAP receptor activity"/>
    <property type="evidence" value="ECO:0000318"/>
    <property type="project" value="GO_Central"/>
</dbReference>
<dbReference type="GO" id="GO:0019905">
    <property type="term" value="F:syntaxin binding"/>
    <property type="evidence" value="ECO:0000318"/>
    <property type="project" value="GO_Central"/>
</dbReference>
<dbReference type="GO" id="GO:0006887">
    <property type="term" value="P:exocytosis"/>
    <property type="evidence" value="ECO:0000318"/>
    <property type="project" value="GO_Central"/>
</dbReference>
<dbReference type="GO" id="GO:0030448">
    <property type="term" value="P:hyphal growth"/>
    <property type="evidence" value="ECO:0000315"/>
    <property type="project" value="CGD"/>
</dbReference>
<dbReference type="GO" id="GO:0009306">
    <property type="term" value="P:protein secretion"/>
    <property type="evidence" value="ECO:0000315"/>
    <property type="project" value="CGD"/>
</dbReference>
<dbReference type="GO" id="GO:0006906">
    <property type="term" value="P:vesicle fusion"/>
    <property type="evidence" value="ECO:0000318"/>
    <property type="project" value="GO_Central"/>
</dbReference>
<dbReference type="CDD" id="cd15857">
    <property type="entry name" value="SNARE_SEC9C"/>
    <property type="match status" value="1"/>
</dbReference>
<dbReference type="CDD" id="cd15886">
    <property type="entry name" value="SNARE_SEC9N"/>
    <property type="match status" value="1"/>
</dbReference>
<dbReference type="FunFam" id="1.20.5.110:FF:000048">
    <property type="entry name" value="Protein transport protein SEC9"/>
    <property type="match status" value="1"/>
</dbReference>
<dbReference type="FunFam" id="1.20.5.110:FF:000043">
    <property type="entry name" value="Protein transport protein sec9"/>
    <property type="match status" value="1"/>
</dbReference>
<dbReference type="Gene3D" id="1.20.5.110">
    <property type="match status" value="2"/>
</dbReference>
<dbReference type="InterPro" id="IPR000727">
    <property type="entry name" value="T_SNARE_dom"/>
</dbReference>
<dbReference type="PANTHER" id="PTHR19305">
    <property type="entry name" value="SYNAPTOSOMAL ASSOCIATED PROTEIN"/>
    <property type="match status" value="1"/>
</dbReference>
<dbReference type="PANTHER" id="PTHR19305:SF9">
    <property type="entry name" value="SYNAPTOSOMAL-ASSOCIATED PROTEIN 29"/>
    <property type="match status" value="1"/>
</dbReference>
<dbReference type="SMART" id="SM00397">
    <property type="entry name" value="t_SNARE"/>
    <property type="match status" value="2"/>
</dbReference>
<dbReference type="SUPFAM" id="SSF58038">
    <property type="entry name" value="SNARE fusion complex"/>
    <property type="match status" value="2"/>
</dbReference>
<dbReference type="PROSITE" id="PS50192">
    <property type="entry name" value="T_SNARE"/>
    <property type="match status" value="1"/>
</dbReference>
<keyword id="KW-0472">Membrane</keyword>
<keyword id="KW-0653">Protein transport</keyword>
<keyword id="KW-1185">Reference proteome</keyword>
<keyword id="KW-0813">Transport</keyword>
<keyword id="KW-0843">Virulence</keyword>
<accession>Q59XP0</accession>
<accession>A0A1D8PPI9</accession>
<accession>Q59WT5</accession>
<comment type="function">
    <text evidence="3">Late secretory t-SNARE protein required for secretion and proper cytokinesis. Plays an important role in the secretion of virulence-associated extracellular enzymes and vesicle-mediated polarized hyphal growth.</text>
</comment>
<comment type="subcellular location">
    <subcellularLocation>
        <location evidence="4">Membrane</location>
        <topology evidence="4">Peripheral membrane protein</topology>
    </subcellularLocation>
</comment>
<comment type="disruption phenotype">
    <text evidence="3">Leads to defects in secretion of degradative enzymes and defects in hyphal extension.</text>
</comment>
<comment type="similarity">
    <text evidence="4">Belongs to the SNAP-25 family.</text>
</comment>
<protein>
    <recommendedName>
        <fullName evidence="4">Protein transport protein SEC9</fullName>
    </recommendedName>
</protein>
<gene>
    <name type="primary">SEC9</name>
    <name type="ordered locus">CAALFM_C601100WA</name>
    <name type="ORF">CaO19.117</name>
    <name type="ORF">CaO19.7764</name>
</gene>
<name>SEC9_CANAL</name>
<evidence type="ECO:0000255" key="1">
    <source>
        <dbReference type="PROSITE-ProRule" id="PRU00202"/>
    </source>
</evidence>
<evidence type="ECO:0000256" key="2">
    <source>
        <dbReference type="SAM" id="MobiDB-lite"/>
    </source>
</evidence>
<evidence type="ECO:0000269" key="3">
    <source>
    </source>
</evidence>
<evidence type="ECO:0000305" key="4"/>
<feature type="chain" id="PRO_0000431521" description="Protein transport protein SEC9">
    <location>
        <begin position="1"/>
        <end position="530"/>
    </location>
</feature>
<feature type="domain" description="t-SNARE coiled-coil homology 1" evidence="1">
    <location>
        <begin position="313"/>
        <end position="375"/>
    </location>
</feature>
<feature type="domain" description="t-SNARE coiled-coil homology 2" evidence="1">
    <location>
        <begin position="467"/>
        <end position="529"/>
    </location>
</feature>
<feature type="region of interest" description="Disordered" evidence="2">
    <location>
        <begin position="1"/>
        <end position="274"/>
    </location>
</feature>
<feature type="compositionally biased region" description="Basic and acidic residues" evidence="2">
    <location>
        <begin position="8"/>
        <end position="22"/>
    </location>
</feature>
<feature type="compositionally biased region" description="Low complexity" evidence="2">
    <location>
        <begin position="61"/>
        <end position="100"/>
    </location>
</feature>
<feature type="compositionally biased region" description="Low complexity" evidence="2">
    <location>
        <begin position="122"/>
        <end position="141"/>
    </location>
</feature>
<feature type="compositionally biased region" description="Polar residues" evidence="2">
    <location>
        <begin position="142"/>
        <end position="160"/>
    </location>
</feature>
<feature type="compositionally biased region" description="Low complexity" evidence="2">
    <location>
        <begin position="161"/>
        <end position="202"/>
    </location>
</feature>
<feature type="compositionally biased region" description="Polar residues" evidence="2">
    <location>
        <begin position="203"/>
        <end position="228"/>
    </location>
</feature>
<feature type="compositionally biased region" description="Polar residues" evidence="2">
    <location>
        <begin position="258"/>
        <end position="268"/>
    </location>
</feature>